<protein>
    <recommendedName>
        <fullName evidence="1">Eukaryotic translation initiation factor 3 subunit C</fullName>
        <shortName evidence="1">eIF3c</shortName>
    </recommendedName>
    <alternativeName>
        <fullName evidence="1">Eukaryotic translation initiation factor 3 93 kDa subunit homolog</fullName>
        <shortName evidence="1">eIF3 p93</shortName>
    </alternativeName>
    <alternativeName>
        <fullName evidence="1">Translation initiation factor eIF3, p93 subunit homolog</fullName>
    </alternativeName>
</protein>
<feature type="chain" id="PRO_0000364281" description="Eukaryotic translation initiation factor 3 subunit C">
    <location>
        <begin position="1"/>
        <end position="860"/>
    </location>
</feature>
<feature type="domain" description="PCI" evidence="2">
    <location>
        <begin position="598"/>
        <end position="772"/>
    </location>
</feature>
<feature type="region of interest" description="Disordered" evidence="3">
    <location>
        <begin position="1"/>
        <end position="79"/>
    </location>
</feature>
<feature type="region of interest" description="Disordered" evidence="3">
    <location>
        <begin position="808"/>
        <end position="860"/>
    </location>
</feature>
<feature type="compositionally biased region" description="Acidic residues" evidence="3">
    <location>
        <begin position="16"/>
        <end position="53"/>
    </location>
</feature>
<feature type="compositionally biased region" description="Acidic residues" evidence="3">
    <location>
        <begin position="67"/>
        <end position="76"/>
    </location>
</feature>
<feature type="compositionally biased region" description="Gly residues" evidence="3">
    <location>
        <begin position="814"/>
        <end position="830"/>
    </location>
</feature>
<feature type="compositionally biased region" description="Low complexity" evidence="3">
    <location>
        <begin position="831"/>
        <end position="847"/>
    </location>
</feature>
<feature type="compositionally biased region" description="Gly residues" evidence="3">
    <location>
        <begin position="848"/>
        <end position="860"/>
    </location>
</feature>
<name>EIF3C_COCIM</name>
<keyword id="KW-0963">Cytoplasm</keyword>
<keyword id="KW-0396">Initiation factor</keyword>
<keyword id="KW-0648">Protein biosynthesis</keyword>
<keyword id="KW-1185">Reference proteome</keyword>
<accession>Q1DP77</accession>
<accession>A0A0D6K9N1</accession>
<accession>J3K513</accession>
<gene>
    <name evidence="1" type="primary">NIP1</name>
    <name type="ORF">CIMG_07886</name>
</gene>
<reference key="1">
    <citation type="journal article" date="2009" name="Genome Res.">
        <title>Comparative genomic analyses of the human fungal pathogens Coccidioides and their relatives.</title>
        <authorList>
            <person name="Sharpton T.J."/>
            <person name="Stajich J.E."/>
            <person name="Rounsley S.D."/>
            <person name="Gardner M.J."/>
            <person name="Wortman J.R."/>
            <person name="Jordar V.S."/>
            <person name="Maiti R."/>
            <person name="Kodira C.D."/>
            <person name="Neafsey D.E."/>
            <person name="Zeng Q."/>
            <person name="Hung C.-Y."/>
            <person name="McMahan C."/>
            <person name="Muszewska A."/>
            <person name="Grynberg M."/>
            <person name="Mandel M.A."/>
            <person name="Kellner E.M."/>
            <person name="Barker B.M."/>
            <person name="Galgiani J.N."/>
            <person name="Orbach M.J."/>
            <person name="Kirkland T.N."/>
            <person name="Cole G.T."/>
            <person name="Henn M.R."/>
            <person name="Birren B.W."/>
            <person name="Taylor J.W."/>
        </authorList>
    </citation>
    <scope>NUCLEOTIDE SEQUENCE [LARGE SCALE GENOMIC DNA]</scope>
    <source>
        <strain>RS</strain>
    </source>
</reference>
<reference key="2">
    <citation type="journal article" date="2010" name="Genome Res.">
        <title>Population genomic sequencing of Coccidioides fungi reveals recent hybridization and transposon control.</title>
        <authorList>
            <person name="Neafsey D.E."/>
            <person name="Barker B.M."/>
            <person name="Sharpton T.J."/>
            <person name="Stajich J.E."/>
            <person name="Park D.J."/>
            <person name="Whiston E."/>
            <person name="Hung C.-Y."/>
            <person name="McMahan C."/>
            <person name="White J."/>
            <person name="Sykes S."/>
            <person name="Heiman D."/>
            <person name="Young S."/>
            <person name="Zeng Q."/>
            <person name="Abouelleil A."/>
            <person name="Aftuck L."/>
            <person name="Bessette D."/>
            <person name="Brown A."/>
            <person name="FitzGerald M."/>
            <person name="Lui A."/>
            <person name="Macdonald J.P."/>
            <person name="Priest M."/>
            <person name="Orbach M.J."/>
            <person name="Galgiani J.N."/>
            <person name="Kirkland T.N."/>
            <person name="Cole G.T."/>
            <person name="Birren B.W."/>
            <person name="Henn M.R."/>
            <person name="Taylor J.W."/>
            <person name="Rounsley S.D."/>
        </authorList>
    </citation>
    <scope>GENOME REANNOTATION</scope>
    <source>
        <strain>RS</strain>
    </source>
</reference>
<organism>
    <name type="scientific">Coccidioides immitis (strain RS)</name>
    <name type="common">Valley fever fungus</name>
    <dbReference type="NCBI Taxonomy" id="246410"/>
    <lineage>
        <taxon>Eukaryota</taxon>
        <taxon>Fungi</taxon>
        <taxon>Dikarya</taxon>
        <taxon>Ascomycota</taxon>
        <taxon>Pezizomycotina</taxon>
        <taxon>Eurotiomycetes</taxon>
        <taxon>Eurotiomycetidae</taxon>
        <taxon>Onygenales</taxon>
        <taxon>Onygenaceae</taxon>
        <taxon>Coccidioides</taxon>
    </lineage>
</organism>
<evidence type="ECO:0000255" key="1">
    <source>
        <dbReference type="HAMAP-Rule" id="MF_03002"/>
    </source>
</evidence>
<evidence type="ECO:0000255" key="2">
    <source>
        <dbReference type="PROSITE-ProRule" id="PRU01185"/>
    </source>
</evidence>
<evidence type="ECO:0000256" key="3">
    <source>
        <dbReference type="SAM" id="MobiDB-lite"/>
    </source>
</evidence>
<comment type="function">
    <text evidence="1">Component of the eukaryotic translation initiation factor 3 (eIF-3) complex, which is involved in protein synthesis of a specialized repertoire of mRNAs and, together with other initiation factors, stimulates binding of mRNA and methionyl-tRNAi to the 40S ribosome. The eIF-3 complex specifically targets and initiates translation of a subset of mRNAs involved in cell proliferation.</text>
</comment>
<comment type="subunit">
    <text evidence="1">Component of the eukaryotic translation initiation factor 3 (eIF-3) complex.</text>
</comment>
<comment type="subcellular location">
    <subcellularLocation>
        <location evidence="1">Cytoplasm</location>
    </subcellularLocation>
</comment>
<comment type="similarity">
    <text evidence="1">Belongs to the eIF-3 subunit C family.</text>
</comment>
<sequence>MSSRFFHGGSDSESSSSDEEELYSDRDEEEVSDEEEETTSEEESSEEESDDEAGLTGAKQYLRGAADLDESDEEEDRVTIVKSAKDKRLEELEGTMKLIENAEKINDWAVISTEFDKLNRQVAKIIQAGPTPKIYIKAIADLEDFVNETVVKQKTTTKKMNASNAKGFNTVKQRIKKNNKDYTAEIEKYRENKDEYLEEEEEQETVIVEKKARTIRIEDTLAQSDEGFSTVGRGGRTLQYTPESILKHLRVIVESRGKKNTDRIEQIKVMEKLLEVASSPYHTIRILLTLISTRFDLATSSLSNYMSTEQWKLAENEISTLISTLEEHPQFVVTEGAEEWEDDEKLPQVAPGEVLKVPGSVVSFVERLDDELIRSLQHIDPHTAEYIERLGDEQLLYNNIVRVLLYVEGLNQVEKSEPRQDSVNRVLMRRLEHLYFKPSQVVTILEDNTWKDLPEKLSSSITPRDMKSDVSLLVQTICNYLFQYSDGIIRARAMLCQIYFLALHDKYHRARDLMLMSHLTENISNFDVSTQILFNRTLVQIGLCAFRAGLIYEAQNTLSEVCGSGRQKELLAQGIILQRYSSVSPEQEKLERQRQLPFHMHINLELLECIYLTSSMFLEVPLMAQTSSSPEMKRRIISKTFRRMLDYNERQVFTGPPENTRDGVIMSAKFLAAGDWKKASETLNSIKIWDLMAQPDKIKAMLAQQIQEEGLRTYLFTYAPFYDTLSITTLSNMFDLTEKKISAIISRMISHEELAAALDQVNNAIVFRKGVELSRLQSQIVTLADKSMSLLEANEKTLEQRTQGMANAFQRDQGPGGRLGRGQGRGGQRTAGGRPPIGGQQRRPGGQQFSGGALGGAIKA</sequence>
<dbReference type="EMBL" id="GG704913">
    <property type="protein sequence ID" value="EAS29140.1"/>
    <property type="molecule type" value="Genomic_DNA"/>
</dbReference>
<dbReference type="RefSeq" id="XP_001240723.1">
    <property type="nucleotide sequence ID" value="XM_001240722.2"/>
</dbReference>
<dbReference type="SMR" id="Q1DP77"/>
<dbReference type="FunCoup" id="Q1DP77">
    <property type="interactions" value="1132"/>
</dbReference>
<dbReference type="STRING" id="246410.Q1DP77"/>
<dbReference type="GeneID" id="4559798"/>
<dbReference type="KEGG" id="cim:CIMG_07886"/>
<dbReference type="VEuPathDB" id="FungiDB:CIMG_07886"/>
<dbReference type="InParanoid" id="Q1DP77"/>
<dbReference type="OMA" id="FRCGLIK"/>
<dbReference type="OrthoDB" id="29647at2759"/>
<dbReference type="Proteomes" id="UP000001261">
    <property type="component" value="Unassembled WGS sequence"/>
</dbReference>
<dbReference type="GO" id="GO:0016282">
    <property type="term" value="C:eukaryotic 43S preinitiation complex"/>
    <property type="evidence" value="ECO:0007669"/>
    <property type="project" value="UniProtKB-UniRule"/>
</dbReference>
<dbReference type="GO" id="GO:0033290">
    <property type="term" value="C:eukaryotic 48S preinitiation complex"/>
    <property type="evidence" value="ECO:0007669"/>
    <property type="project" value="UniProtKB-UniRule"/>
</dbReference>
<dbReference type="GO" id="GO:0005852">
    <property type="term" value="C:eukaryotic translation initiation factor 3 complex"/>
    <property type="evidence" value="ECO:0007669"/>
    <property type="project" value="UniProtKB-UniRule"/>
</dbReference>
<dbReference type="GO" id="GO:0003723">
    <property type="term" value="F:RNA binding"/>
    <property type="evidence" value="ECO:0007669"/>
    <property type="project" value="InterPro"/>
</dbReference>
<dbReference type="GO" id="GO:0003743">
    <property type="term" value="F:translation initiation factor activity"/>
    <property type="evidence" value="ECO:0007669"/>
    <property type="project" value="UniProtKB-UniRule"/>
</dbReference>
<dbReference type="GO" id="GO:0031369">
    <property type="term" value="F:translation initiation factor binding"/>
    <property type="evidence" value="ECO:0007669"/>
    <property type="project" value="InterPro"/>
</dbReference>
<dbReference type="GO" id="GO:0001732">
    <property type="term" value="P:formation of cytoplasmic translation initiation complex"/>
    <property type="evidence" value="ECO:0007669"/>
    <property type="project" value="UniProtKB-UniRule"/>
</dbReference>
<dbReference type="FunFam" id="1.10.10.10:FF:000300">
    <property type="entry name" value="Eukaryotic translation initiation factor 3 subunit C"/>
    <property type="match status" value="1"/>
</dbReference>
<dbReference type="Gene3D" id="1.10.10.10">
    <property type="entry name" value="Winged helix-like DNA-binding domain superfamily/Winged helix DNA-binding domain"/>
    <property type="match status" value="1"/>
</dbReference>
<dbReference type="HAMAP" id="MF_03002">
    <property type="entry name" value="eIF3c"/>
    <property type="match status" value="1"/>
</dbReference>
<dbReference type="InterPro" id="IPR027516">
    <property type="entry name" value="EIF3C"/>
</dbReference>
<dbReference type="InterPro" id="IPR008905">
    <property type="entry name" value="EIF3C_N_dom"/>
</dbReference>
<dbReference type="InterPro" id="IPR000717">
    <property type="entry name" value="PCI_dom"/>
</dbReference>
<dbReference type="InterPro" id="IPR036388">
    <property type="entry name" value="WH-like_DNA-bd_sf"/>
</dbReference>
<dbReference type="InterPro" id="IPR036390">
    <property type="entry name" value="WH_DNA-bd_sf"/>
</dbReference>
<dbReference type="PANTHER" id="PTHR13937">
    <property type="entry name" value="EUKARYOTIC TRANSLATION INITATION FACTOR 3, SUBUNIT 8 EIF3S8 -RELATED"/>
    <property type="match status" value="1"/>
</dbReference>
<dbReference type="PANTHER" id="PTHR13937:SF0">
    <property type="entry name" value="EUKARYOTIC TRANSLATION INITIATION FACTOR 3 SUBUNIT C-RELATED"/>
    <property type="match status" value="1"/>
</dbReference>
<dbReference type="Pfam" id="PF05470">
    <property type="entry name" value="eIF-3c_N"/>
    <property type="match status" value="2"/>
</dbReference>
<dbReference type="Pfam" id="PF01399">
    <property type="entry name" value="PCI"/>
    <property type="match status" value="1"/>
</dbReference>
<dbReference type="SMART" id="SM00088">
    <property type="entry name" value="PINT"/>
    <property type="match status" value="1"/>
</dbReference>
<dbReference type="SUPFAM" id="SSF46785">
    <property type="entry name" value="Winged helix' DNA-binding domain"/>
    <property type="match status" value="1"/>
</dbReference>
<dbReference type="PROSITE" id="PS50250">
    <property type="entry name" value="PCI"/>
    <property type="match status" value="1"/>
</dbReference>
<proteinExistence type="inferred from homology"/>